<reference key="1">
    <citation type="journal article" date="2000" name="Curr. Microbiol.">
        <title>Molecular characterization of the Leucine plasmid from Buchnera aphidicola, primary endosymbiont of the aphid Acyrthosiphon pisum.</title>
        <authorList>
            <person name="Soler T."/>
            <person name="Latorre A."/>
            <person name="Sabater B."/>
            <person name="Silva F.J."/>
        </authorList>
    </citation>
    <scope>NUCLEOTIDE SEQUENCE [GENOMIC DNA]</scope>
</reference>
<reference key="2">
    <citation type="journal article" date="2000" name="Nature">
        <title>Genome sequence of the endocellular bacterial symbiont of aphids Buchnera sp. APS.</title>
        <authorList>
            <person name="Shigenobu S."/>
            <person name="Watanabe H."/>
            <person name="Hattori M."/>
            <person name="Sakaki Y."/>
            <person name="Ishikawa H."/>
        </authorList>
    </citation>
    <scope>NUCLEOTIDE SEQUENCE [LARGE SCALE GENOMIC DNA]</scope>
    <source>
        <strain>APS</strain>
    </source>
</reference>
<reference key="3">
    <citation type="journal article" date="2001" name="J. Bacteriol.">
        <title>Vertical transmission of biosynthetic plasmids in aphid endosymbionts (Buchnera).</title>
        <authorList>
            <person name="Wernegreen J.J."/>
            <person name="Moran N.A."/>
        </authorList>
    </citation>
    <scope>NUCLEOTIDE SEQUENCE [GENOMIC DNA] OF 1-448</scope>
</reference>
<organism>
    <name type="scientific">Buchnera aphidicola subsp. Acyrthosiphon pisum (strain APS)</name>
    <name type="common">Acyrthosiphon pisum symbiotic bacterium</name>
    <dbReference type="NCBI Taxonomy" id="107806"/>
    <lineage>
        <taxon>Bacteria</taxon>
        <taxon>Pseudomonadati</taxon>
        <taxon>Pseudomonadota</taxon>
        <taxon>Gammaproteobacteria</taxon>
        <taxon>Enterobacterales</taxon>
        <taxon>Erwiniaceae</taxon>
        <taxon>Buchnera</taxon>
    </lineage>
</organism>
<feature type="chain" id="PRO_0000076715" description="3-isopropylmalate dehydratase large subunit">
    <location>
        <begin position="1"/>
        <end position="471"/>
    </location>
</feature>
<feature type="binding site" evidence="1">
    <location>
        <position position="347"/>
    </location>
    <ligand>
        <name>[4Fe-4S] cluster</name>
        <dbReference type="ChEBI" id="CHEBI:49883"/>
    </ligand>
</feature>
<feature type="binding site" evidence="1">
    <location>
        <position position="407"/>
    </location>
    <ligand>
        <name>[4Fe-4S] cluster</name>
        <dbReference type="ChEBI" id="CHEBI:49883"/>
    </ligand>
</feature>
<feature type="binding site" evidence="1">
    <location>
        <position position="410"/>
    </location>
    <ligand>
        <name>[4Fe-4S] cluster</name>
        <dbReference type="ChEBI" id="CHEBI:49883"/>
    </ligand>
</feature>
<feature type="sequence conflict" description="In Ref. 3; AAG31406." evidence="2" ref="3">
    <original>T</original>
    <variation>A</variation>
    <location>
        <position position="36"/>
    </location>
</feature>
<feature type="sequence conflict" description="In Ref. 1; CAB56192." evidence="2" ref="1">
    <original>M</original>
    <variation>V</variation>
    <location>
        <position position="122"/>
    </location>
</feature>
<feature type="sequence conflict" description="In Ref. 1; CAB56192." evidence="2" ref="1">
    <original>G</original>
    <variation>D</variation>
    <location>
        <position position="145"/>
    </location>
</feature>
<feature type="sequence conflict" description="In Ref. 1; CAB56192." evidence="2" ref="1">
    <original>K</original>
    <variation>E</variation>
    <location>
        <position position="341"/>
    </location>
</feature>
<feature type="sequence conflict" description="In Ref. 1; CAB56192." evidence="2" ref="1">
    <original>G</original>
    <variation>S</variation>
    <location>
        <position position="380"/>
    </location>
</feature>
<feature type="sequence conflict" description="In Ref. 1; CAB56192 and 3; AAG31406." evidence="2" ref="1 3">
    <original>S</original>
    <variation>N</variation>
    <location>
        <position position="397"/>
    </location>
</feature>
<feature type="sequence conflict" description="In Ref. 3; AAG31406." evidence="2" ref="3">
    <original>T</original>
    <variation>H</variation>
    <location>
        <position position="427"/>
    </location>
</feature>
<dbReference type="EC" id="4.2.1.33" evidence="1"/>
<dbReference type="EMBL" id="AJ006878">
    <property type="protein sequence ID" value="CAB56192.1"/>
    <property type="molecule type" value="Genomic_DNA"/>
</dbReference>
<dbReference type="EMBL" id="AP001071">
    <property type="protein sequence ID" value="BAA95425.1"/>
    <property type="status" value="ALT_INIT"/>
    <property type="molecule type" value="Genomic_DNA"/>
</dbReference>
<dbReference type="EMBL" id="AF197457">
    <property type="protein sequence ID" value="AAG31406.1"/>
    <property type="molecule type" value="Genomic_DNA"/>
</dbReference>
<dbReference type="RefSeq" id="NP_057970.1">
    <property type="nucleotide sequence ID" value="NC_002253.1"/>
</dbReference>
<dbReference type="RefSeq" id="WP_164927322.1">
    <property type="nucleotide sequence ID" value="NC_002253.1"/>
</dbReference>
<dbReference type="SMR" id="P56934"/>
<dbReference type="EnsemblBacteria" id="BAA95425">
    <property type="protein sequence ID" value="BAA95425"/>
    <property type="gene ID" value="BAA95425"/>
</dbReference>
<dbReference type="KEGG" id="buc:BUpL06"/>
<dbReference type="PATRIC" id="fig|107806.10.peg.12"/>
<dbReference type="HOGENOM" id="CLU_006714_3_4_6"/>
<dbReference type="UniPathway" id="UPA00048">
    <property type="reaction ID" value="UER00071"/>
</dbReference>
<dbReference type="Proteomes" id="UP000001806">
    <property type="component" value="Plasmid pLeu"/>
</dbReference>
<dbReference type="GO" id="GO:0003861">
    <property type="term" value="F:3-isopropylmalate dehydratase activity"/>
    <property type="evidence" value="ECO:0007669"/>
    <property type="project" value="UniProtKB-UniRule"/>
</dbReference>
<dbReference type="GO" id="GO:0051539">
    <property type="term" value="F:4 iron, 4 sulfur cluster binding"/>
    <property type="evidence" value="ECO:0007669"/>
    <property type="project" value="UniProtKB-KW"/>
</dbReference>
<dbReference type="GO" id="GO:0046872">
    <property type="term" value="F:metal ion binding"/>
    <property type="evidence" value="ECO:0007669"/>
    <property type="project" value="UniProtKB-KW"/>
</dbReference>
<dbReference type="GO" id="GO:0009098">
    <property type="term" value="P:L-leucine biosynthetic process"/>
    <property type="evidence" value="ECO:0007669"/>
    <property type="project" value="UniProtKB-UniRule"/>
</dbReference>
<dbReference type="CDD" id="cd01583">
    <property type="entry name" value="IPMI"/>
    <property type="match status" value="1"/>
</dbReference>
<dbReference type="FunFam" id="3.30.499.10:FF:000006">
    <property type="entry name" value="3-isopropylmalate dehydratase large subunit"/>
    <property type="match status" value="1"/>
</dbReference>
<dbReference type="FunFam" id="3.30.499.10:FF:000007">
    <property type="entry name" value="3-isopropylmalate dehydratase large subunit"/>
    <property type="match status" value="1"/>
</dbReference>
<dbReference type="Gene3D" id="3.30.499.10">
    <property type="entry name" value="Aconitase, domain 3"/>
    <property type="match status" value="2"/>
</dbReference>
<dbReference type="HAMAP" id="MF_01026">
    <property type="entry name" value="LeuC_type1"/>
    <property type="match status" value="1"/>
</dbReference>
<dbReference type="InterPro" id="IPR004430">
    <property type="entry name" value="3-IsopropMal_deHydase_lsu"/>
</dbReference>
<dbReference type="InterPro" id="IPR015931">
    <property type="entry name" value="Acnase/IPM_dHydase_lsu_aba_1/3"/>
</dbReference>
<dbReference type="InterPro" id="IPR001030">
    <property type="entry name" value="Acoase/IPM_deHydtase_lsu_aba"/>
</dbReference>
<dbReference type="InterPro" id="IPR018136">
    <property type="entry name" value="Aconitase_4Fe-4S_BS"/>
</dbReference>
<dbReference type="InterPro" id="IPR036008">
    <property type="entry name" value="Aconitase_4Fe-4S_dom"/>
</dbReference>
<dbReference type="InterPro" id="IPR050067">
    <property type="entry name" value="IPM_dehydratase_rel_enz"/>
</dbReference>
<dbReference type="InterPro" id="IPR033941">
    <property type="entry name" value="IPMI_cat"/>
</dbReference>
<dbReference type="NCBIfam" id="TIGR00170">
    <property type="entry name" value="leuC"/>
    <property type="match status" value="1"/>
</dbReference>
<dbReference type="NCBIfam" id="NF004016">
    <property type="entry name" value="PRK05478.1"/>
    <property type="match status" value="1"/>
</dbReference>
<dbReference type="NCBIfam" id="NF009116">
    <property type="entry name" value="PRK12466.1"/>
    <property type="match status" value="1"/>
</dbReference>
<dbReference type="PANTHER" id="PTHR43822:SF9">
    <property type="entry name" value="3-ISOPROPYLMALATE DEHYDRATASE"/>
    <property type="match status" value="1"/>
</dbReference>
<dbReference type="PANTHER" id="PTHR43822">
    <property type="entry name" value="HOMOACONITASE, MITOCHONDRIAL-RELATED"/>
    <property type="match status" value="1"/>
</dbReference>
<dbReference type="Pfam" id="PF00330">
    <property type="entry name" value="Aconitase"/>
    <property type="match status" value="1"/>
</dbReference>
<dbReference type="PRINTS" id="PR00415">
    <property type="entry name" value="ACONITASE"/>
</dbReference>
<dbReference type="SUPFAM" id="SSF53732">
    <property type="entry name" value="Aconitase iron-sulfur domain"/>
    <property type="match status" value="1"/>
</dbReference>
<dbReference type="PROSITE" id="PS00450">
    <property type="entry name" value="ACONITASE_1"/>
    <property type="match status" value="1"/>
</dbReference>
<dbReference type="PROSITE" id="PS01244">
    <property type="entry name" value="ACONITASE_2"/>
    <property type="match status" value="1"/>
</dbReference>
<gene>
    <name evidence="1" type="primary">leuC</name>
    <name type="ordered locus">BUpL06</name>
</gene>
<proteinExistence type="inferred from homology"/>
<accession>P56934</accession>
<accession>Q9EVF9</accession>
<accession>Q9KGP8</accession>
<accession>Q9R6R3</accession>
<sequence length="471" mass="52281">MKKTLYDKIYDSHIVYEEKNNTSLLYIDLHLLHEVTSPQAFDSLRDKNRKVRQPKKTFATMDHNVSTTSQDINASGSMAKVQMQELIKNCSEFNISLYDIKNPNQGIVHVISPEKGMTLPGMTIVCGDSHTSTHGAFGALSFGIGTSEVEHVLATQTLKQQRFKNMKIEITGEIQKFVTAKDLILFIIGKLGSSGGAGYIIEFCGNVIEKMSMEERMTICNMAIEIGAKSGLIAPDEVTFSYLKNKMYAPRGVFWKKALNFWKNLKSDKNAFFDKVVNINISDLSPQITWGTNPDQVISIDQKIPDFSSFDNLIKKDLAKSACKYMGLKIGTYLTNITVDKVFIGSCTNGRIEDLRAASKILKDKKIANNVKAIVVPGSGSVKREAENEGLDKIFISAGFEWRLPGCSMCLGMNKDRLNDGERCASTSNRNFEGRQGRGGRTHLVSPIMAAAAAVYGKFVDVRKLYNGENN</sequence>
<keyword id="KW-0004">4Fe-4S</keyword>
<keyword id="KW-0028">Amino-acid biosynthesis</keyword>
<keyword id="KW-0100">Branched-chain amino acid biosynthesis</keyword>
<keyword id="KW-0408">Iron</keyword>
<keyword id="KW-0411">Iron-sulfur</keyword>
<keyword id="KW-0432">Leucine biosynthesis</keyword>
<keyword id="KW-0456">Lyase</keyword>
<keyword id="KW-0479">Metal-binding</keyword>
<keyword id="KW-0614">Plasmid</keyword>
<keyword id="KW-1185">Reference proteome</keyword>
<evidence type="ECO:0000255" key="1">
    <source>
        <dbReference type="HAMAP-Rule" id="MF_01026"/>
    </source>
</evidence>
<evidence type="ECO:0000305" key="2"/>
<name>LEUC_BUCAI</name>
<comment type="function">
    <text evidence="1">Catalyzes the isomerization between 2-isopropylmalate and 3-isopropylmalate, via the formation of 2-isopropylmaleate.</text>
</comment>
<comment type="catalytic activity">
    <reaction evidence="1">
        <text>(2R,3S)-3-isopropylmalate = (2S)-2-isopropylmalate</text>
        <dbReference type="Rhea" id="RHEA:32287"/>
        <dbReference type="ChEBI" id="CHEBI:1178"/>
        <dbReference type="ChEBI" id="CHEBI:35121"/>
        <dbReference type="EC" id="4.2.1.33"/>
    </reaction>
</comment>
<comment type="cofactor">
    <cofactor evidence="1">
        <name>[4Fe-4S] cluster</name>
        <dbReference type="ChEBI" id="CHEBI:49883"/>
    </cofactor>
    <text evidence="1">Binds 1 [4Fe-4S] cluster per subunit.</text>
</comment>
<comment type="pathway">
    <text evidence="1">Amino-acid biosynthesis; L-leucine biosynthesis; L-leucine from 3-methyl-2-oxobutanoate: step 2/4.</text>
</comment>
<comment type="subunit">
    <text>Heterodimer of LeuC and LeuD.</text>
</comment>
<comment type="similarity">
    <text evidence="1">Belongs to the aconitase/IPM isomerase family. LeuC type 1 subfamily.</text>
</comment>
<comment type="sequence caution" evidence="2">
    <conflict type="erroneous initiation">
        <sequence resource="EMBL-CDS" id="BAA95425"/>
    </conflict>
</comment>
<protein>
    <recommendedName>
        <fullName evidence="1">3-isopropylmalate dehydratase large subunit</fullName>
        <ecNumber evidence="1">4.2.1.33</ecNumber>
    </recommendedName>
    <alternativeName>
        <fullName evidence="1">Alpha-IPM isomerase</fullName>
        <shortName evidence="1">IPMI</shortName>
    </alternativeName>
    <alternativeName>
        <fullName evidence="1">Isopropylmalate isomerase</fullName>
    </alternativeName>
</protein>
<geneLocation type="plasmid">
    <name>pLeu</name>
    <name>pBAp1</name>
</geneLocation>